<reference key="1">
    <citation type="journal article" date="2010" name="Genome Biol. Evol.">
        <title>Continuing evolution of Burkholderia mallei through genome reduction and large-scale rearrangements.</title>
        <authorList>
            <person name="Losada L."/>
            <person name="Ronning C.M."/>
            <person name="DeShazer D."/>
            <person name="Woods D."/>
            <person name="Fedorova N."/>
            <person name="Kim H.S."/>
            <person name="Shabalina S.A."/>
            <person name="Pearson T.R."/>
            <person name="Brinkac L."/>
            <person name="Tan P."/>
            <person name="Nandi T."/>
            <person name="Crabtree J."/>
            <person name="Badger J."/>
            <person name="Beckstrom-Sternberg S."/>
            <person name="Saqib M."/>
            <person name="Schutzer S.E."/>
            <person name="Keim P."/>
            <person name="Nierman W.C."/>
        </authorList>
    </citation>
    <scope>NUCLEOTIDE SEQUENCE [LARGE SCALE GENOMIC DNA]</scope>
    <source>
        <strain>NCTC 10229</strain>
    </source>
</reference>
<evidence type="ECO:0000255" key="1">
    <source>
        <dbReference type="HAMAP-Rule" id="MF_00480"/>
    </source>
</evidence>
<evidence type="ECO:0000305" key="2"/>
<dbReference type="EMBL" id="CP000546">
    <property type="protein sequence ID" value="ABN00999.1"/>
    <property type="molecule type" value="Genomic_DNA"/>
</dbReference>
<dbReference type="RefSeq" id="WP_004198359.1">
    <property type="nucleotide sequence ID" value="NC_008836.1"/>
</dbReference>
<dbReference type="SMR" id="A2S7H2"/>
<dbReference type="GeneID" id="93171021"/>
<dbReference type="KEGG" id="bml:BMA10229_A1920"/>
<dbReference type="HOGENOM" id="CLU_072226_1_1_4"/>
<dbReference type="Proteomes" id="UP000002283">
    <property type="component" value="Chromosome I"/>
</dbReference>
<dbReference type="GO" id="GO:0015935">
    <property type="term" value="C:small ribosomal subunit"/>
    <property type="evidence" value="ECO:0007669"/>
    <property type="project" value="InterPro"/>
</dbReference>
<dbReference type="GO" id="GO:0019843">
    <property type="term" value="F:rRNA binding"/>
    <property type="evidence" value="ECO:0007669"/>
    <property type="project" value="UniProtKB-UniRule"/>
</dbReference>
<dbReference type="GO" id="GO:0003735">
    <property type="term" value="F:structural constituent of ribosome"/>
    <property type="evidence" value="ECO:0007669"/>
    <property type="project" value="InterPro"/>
</dbReference>
<dbReference type="GO" id="GO:0000049">
    <property type="term" value="F:tRNA binding"/>
    <property type="evidence" value="ECO:0007669"/>
    <property type="project" value="UniProtKB-UniRule"/>
</dbReference>
<dbReference type="GO" id="GO:0006412">
    <property type="term" value="P:translation"/>
    <property type="evidence" value="ECO:0007669"/>
    <property type="project" value="UniProtKB-UniRule"/>
</dbReference>
<dbReference type="CDD" id="cd14869">
    <property type="entry name" value="uS7_Bacteria"/>
    <property type="match status" value="1"/>
</dbReference>
<dbReference type="FunFam" id="1.10.455.10:FF:000001">
    <property type="entry name" value="30S ribosomal protein S7"/>
    <property type="match status" value="1"/>
</dbReference>
<dbReference type="Gene3D" id="1.10.455.10">
    <property type="entry name" value="Ribosomal protein S7 domain"/>
    <property type="match status" value="1"/>
</dbReference>
<dbReference type="HAMAP" id="MF_00480_B">
    <property type="entry name" value="Ribosomal_uS7_B"/>
    <property type="match status" value="1"/>
</dbReference>
<dbReference type="InterPro" id="IPR000235">
    <property type="entry name" value="Ribosomal_uS7"/>
</dbReference>
<dbReference type="InterPro" id="IPR005717">
    <property type="entry name" value="Ribosomal_uS7_bac/org-type"/>
</dbReference>
<dbReference type="InterPro" id="IPR020606">
    <property type="entry name" value="Ribosomal_uS7_CS"/>
</dbReference>
<dbReference type="InterPro" id="IPR023798">
    <property type="entry name" value="Ribosomal_uS7_dom"/>
</dbReference>
<dbReference type="InterPro" id="IPR036823">
    <property type="entry name" value="Ribosomal_uS7_dom_sf"/>
</dbReference>
<dbReference type="NCBIfam" id="TIGR01029">
    <property type="entry name" value="rpsG_bact"/>
    <property type="match status" value="1"/>
</dbReference>
<dbReference type="PANTHER" id="PTHR11205">
    <property type="entry name" value="RIBOSOMAL PROTEIN S7"/>
    <property type="match status" value="1"/>
</dbReference>
<dbReference type="Pfam" id="PF00177">
    <property type="entry name" value="Ribosomal_S7"/>
    <property type="match status" value="1"/>
</dbReference>
<dbReference type="PIRSF" id="PIRSF002122">
    <property type="entry name" value="RPS7p_RPS7a_RPS5e_RPS7o"/>
    <property type="match status" value="1"/>
</dbReference>
<dbReference type="SUPFAM" id="SSF47973">
    <property type="entry name" value="Ribosomal protein S7"/>
    <property type="match status" value="1"/>
</dbReference>
<dbReference type="PROSITE" id="PS00052">
    <property type="entry name" value="RIBOSOMAL_S7"/>
    <property type="match status" value="1"/>
</dbReference>
<name>RS7_BURM9</name>
<accession>A2S7H2</accession>
<feature type="chain" id="PRO_1000014158" description="Small ribosomal subunit protein uS7">
    <location>
        <begin position="1"/>
        <end position="156"/>
    </location>
</feature>
<gene>
    <name evidence="1" type="primary">rpsG</name>
    <name type="ordered locus">BMA10229_A1920</name>
</gene>
<comment type="function">
    <text evidence="1">One of the primary rRNA binding proteins, it binds directly to 16S rRNA where it nucleates assembly of the head domain of the 30S subunit. Is located at the subunit interface close to the decoding center, probably blocks exit of the E-site tRNA.</text>
</comment>
<comment type="subunit">
    <text evidence="1">Part of the 30S ribosomal subunit. Contacts proteins S9 and S11.</text>
</comment>
<comment type="similarity">
    <text evidence="1">Belongs to the universal ribosomal protein uS7 family.</text>
</comment>
<sequence length="156" mass="17686">MPRRREVPKREVLPDPKYGNVDVAKFMNMLMLSGKKSVAERIVYGAFEQIQTKGGKDPLEVFTVALNNVKPVVEVKSRRVGGANYQVPVEVRPSRRMALAMRWLREAAKKRSEKSMALRLAGELSEAAEGRGGAMKKRDEVHRMAEANRAFSHFRF</sequence>
<protein>
    <recommendedName>
        <fullName evidence="1">Small ribosomal subunit protein uS7</fullName>
    </recommendedName>
    <alternativeName>
        <fullName evidence="2">30S ribosomal protein S7</fullName>
    </alternativeName>
</protein>
<proteinExistence type="inferred from homology"/>
<organism>
    <name type="scientific">Burkholderia mallei (strain NCTC 10229)</name>
    <dbReference type="NCBI Taxonomy" id="412022"/>
    <lineage>
        <taxon>Bacteria</taxon>
        <taxon>Pseudomonadati</taxon>
        <taxon>Pseudomonadota</taxon>
        <taxon>Betaproteobacteria</taxon>
        <taxon>Burkholderiales</taxon>
        <taxon>Burkholderiaceae</taxon>
        <taxon>Burkholderia</taxon>
        <taxon>pseudomallei group</taxon>
    </lineage>
</organism>
<keyword id="KW-0687">Ribonucleoprotein</keyword>
<keyword id="KW-0689">Ribosomal protein</keyword>
<keyword id="KW-0694">RNA-binding</keyword>
<keyword id="KW-0699">rRNA-binding</keyword>
<keyword id="KW-0820">tRNA-binding</keyword>